<reference key="1">
    <citation type="journal article" date="2011" name="MBio">
        <title>Novel metabolic attributes of the genus Cyanothece, comprising a group of unicellular nitrogen-fixing Cyanobacteria.</title>
        <authorList>
            <person name="Bandyopadhyay A."/>
            <person name="Elvitigala T."/>
            <person name="Welsh E."/>
            <person name="Stockel J."/>
            <person name="Liberton M."/>
            <person name="Min H."/>
            <person name="Sherman L.A."/>
            <person name="Pakrasi H.B."/>
        </authorList>
    </citation>
    <scope>NUCLEOTIDE SEQUENCE [LARGE SCALE GENOMIC DNA]</scope>
    <source>
        <strain>PCC 7425 / ATCC 29141</strain>
    </source>
</reference>
<dbReference type="EMBL" id="CP001344">
    <property type="protein sequence ID" value="ACL46548.1"/>
    <property type="molecule type" value="Genomic_DNA"/>
</dbReference>
<dbReference type="SMR" id="B8HXK3"/>
<dbReference type="STRING" id="395961.Cyan7425_4235"/>
<dbReference type="KEGG" id="cyn:Cyan7425_4235"/>
<dbReference type="eggNOG" id="COG0264">
    <property type="taxonomic scope" value="Bacteria"/>
</dbReference>
<dbReference type="HOGENOM" id="CLU_047155_1_0_3"/>
<dbReference type="OrthoDB" id="9808348at2"/>
<dbReference type="GO" id="GO:0005737">
    <property type="term" value="C:cytoplasm"/>
    <property type="evidence" value="ECO:0007669"/>
    <property type="project" value="UniProtKB-SubCell"/>
</dbReference>
<dbReference type="GO" id="GO:0003746">
    <property type="term" value="F:translation elongation factor activity"/>
    <property type="evidence" value="ECO:0007669"/>
    <property type="project" value="UniProtKB-UniRule"/>
</dbReference>
<dbReference type="CDD" id="cd14275">
    <property type="entry name" value="UBA_EF-Ts"/>
    <property type="match status" value="1"/>
</dbReference>
<dbReference type="FunFam" id="1.10.286.20:FF:000001">
    <property type="entry name" value="Elongation factor Ts"/>
    <property type="match status" value="1"/>
</dbReference>
<dbReference type="FunFam" id="1.10.8.10:FF:000001">
    <property type="entry name" value="Elongation factor Ts"/>
    <property type="match status" value="1"/>
</dbReference>
<dbReference type="Gene3D" id="1.10.286.20">
    <property type="match status" value="1"/>
</dbReference>
<dbReference type="Gene3D" id="1.10.8.10">
    <property type="entry name" value="DNA helicase RuvA subunit, C-terminal domain"/>
    <property type="match status" value="1"/>
</dbReference>
<dbReference type="Gene3D" id="3.30.479.20">
    <property type="entry name" value="Elongation factor Ts, dimerisation domain"/>
    <property type="match status" value="1"/>
</dbReference>
<dbReference type="HAMAP" id="MF_00050">
    <property type="entry name" value="EF_Ts"/>
    <property type="match status" value="1"/>
</dbReference>
<dbReference type="InterPro" id="IPR036402">
    <property type="entry name" value="EF-Ts_dimer_sf"/>
</dbReference>
<dbReference type="InterPro" id="IPR001816">
    <property type="entry name" value="Transl_elong_EFTs/EF1B"/>
</dbReference>
<dbReference type="InterPro" id="IPR014039">
    <property type="entry name" value="Transl_elong_EFTs/EF1B_dimer"/>
</dbReference>
<dbReference type="InterPro" id="IPR018101">
    <property type="entry name" value="Transl_elong_Ts_CS"/>
</dbReference>
<dbReference type="InterPro" id="IPR009060">
    <property type="entry name" value="UBA-like_sf"/>
</dbReference>
<dbReference type="NCBIfam" id="TIGR00116">
    <property type="entry name" value="tsf"/>
    <property type="match status" value="1"/>
</dbReference>
<dbReference type="PANTHER" id="PTHR11741">
    <property type="entry name" value="ELONGATION FACTOR TS"/>
    <property type="match status" value="1"/>
</dbReference>
<dbReference type="PANTHER" id="PTHR11741:SF0">
    <property type="entry name" value="ELONGATION FACTOR TS, MITOCHONDRIAL"/>
    <property type="match status" value="1"/>
</dbReference>
<dbReference type="Pfam" id="PF00889">
    <property type="entry name" value="EF_TS"/>
    <property type="match status" value="2"/>
</dbReference>
<dbReference type="SUPFAM" id="SSF54713">
    <property type="entry name" value="Elongation factor Ts (EF-Ts), dimerisation domain"/>
    <property type="match status" value="1"/>
</dbReference>
<dbReference type="SUPFAM" id="SSF46934">
    <property type="entry name" value="UBA-like"/>
    <property type="match status" value="1"/>
</dbReference>
<dbReference type="PROSITE" id="PS01126">
    <property type="entry name" value="EF_TS_1"/>
    <property type="match status" value="1"/>
</dbReference>
<dbReference type="PROSITE" id="PS01127">
    <property type="entry name" value="EF_TS_2"/>
    <property type="match status" value="1"/>
</dbReference>
<proteinExistence type="inferred from homology"/>
<keyword id="KW-0963">Cytoplasm</keyword>
<keyword id="KW-0251">Elongation factor</keyword>
<keyword id="KW-0648">Protein biosynthesis</keyword>
<protein>
    <recommendedName>
        <fullName evidence="1">Elongation factor Ts</fullName>
        <shortName evidence="1">EF-Ts</shortName>
    </recommendedName>
</protein>
<organism>
    <name type="scientific">Cyanothece sp. (strain PCC 7425 / ATCC 29141)</name>
    <dbReference type="NCBI Taxonomy" id="395961"/>
    <lineage>
        <taxon>Bacteria</taxon>
        <taxon>Bacillati</taxon>
        <taxon>Cyanobacteriota</taxon>
        <taxon>Cyanophyceae</taxon>
        <taxon>Gomontiellales</taxon>
        <taxon>Cyanothecaceae</taxon>
        <taxon>Cyanothece</taxon>
    </lineage>
</organism>
<evidence type="ECO:0000255" key="1">
    <source>
        <dbReference type="HAMAP-Rule" id="MF_00050"/>
    </source>
</evidence>
<evidence type="ECO:0000256" key="2">
    <source>
        <dbReference type="SAM" id="MobiDB-lite"/>
    </source>
</evidence>
<comment type="function">
    <text evidence="1">Associates with the EF-Tu.GDP complex and induces the exchange of GDP to GTP. It remains bound to the aminoacyl-tRNA.EF-Tu.GTP complex up to the GTP hydrolysis stage on the ribosome.</text>
</comment>
<comment type="subcellular location">
    <subcellularLocation>
        <location evidence="1">Cytoplasm</location>
    </subcellularLocation>
</comment>
<comment type="similarity">
    <text evidence="1">Belongs to the EF-Ts family.</text>
</comment>
<sequence length="263" mass="28463">MAEITAQLVKQLRDKTGAGMMDCKKALQETGGEMEKAIDWLRQKGLASAGKKAGRLTAEGLVDSYIHTGGRIGVLVEVNCETDFVARNEAFRSLVQDIAKQIAACPNVEYVSIDEIPPATVEREKAIAMGSDALKGKPENVKEKIVQGKMDKTLRELCLLDQPFIRDQSITVEELIKQAIAQLGENVKVRRFVRFVMGEGIEKEEANLAEEVAAQIAAKEAPPAVVEAPVAETPEPAVAETPEAKPAATESKPAKSKSAKKKK</sequence>
<name>EFTS_CYAP4</name>
<gene>
    <name evidence="1" type="primary">tsf</name>
    <name type="ordered locus">Cyan7425_4235</name>
</gene>
<accession>B8HXK3</accession>
<feature type="chain" id="PRO_1000189873" description="Elongation factor Ts">
    <location>
        <begin position="1"/>
        <end position="263"/>
    </location>
</feature>
<feature type="region of interest" description="Involved in Mg(2+) ion dislocation from EF-Tu" evidence="1">
    <location>
        <begin position="82"/>
        <end position="85"/>
    </location>
</feature>
<feature type="region of interest" description="Disordered" evidence="2">
    <location>
        <begin position="221"/>
        <end position="263"/>
    </location>
</feature>
<feature type="compositionally biased region" description="Low complexity" evidence="2">
    <location>
        <begin position="221"/>
        <end position="251"/>
    </location>
</feature>
<feature type="compositionally biased region" description="Basic residues" evidence="2">
    <location>
        <begin position="254"/>
        <end position="263"/>
    </location>
</feature>